<name>CYB_MARBR</name>
<keyword id="KW-0249">Electron transport</keyword>
<keyword id="KW-0349">Heme</keyword>
<keyword id="KW-0408">Iron</keyword>
<keyword id="KW-0472">Membrane</keyword>
<keyword id="KW-0479">Metal-binding</keyword>
<keyword id="KW-0496">Mitochondrion</keyword>
<keyword id="KW-0999">Mitochondrion inner membrane</keyword>
<keyword id="KW-0679">Respiratory chain</keyword>
<keyword id="KW-0812">Transmembrane</keyword>
<keyword id="KW-1133">Transmembrane helix</keyword>
<keyword id="KW-0813">Transport</keyword>
<keyword id="KW-0830">Ubiquinone</keyword>
<geneLocation type="mitochondrion"/>
<feature type="chain" id="PRO_0000255066" description="Cytochrome b">
    <location>
        <begin position="1"/>
        <end position="379"/>
    </location>
</feature>
<feature type="transmembrane region" description="Helical" evidence="2">
    <location>
        <begin position="33"/>
        <end position="53"/>
    </location>
</feature>
<feature type="transmembrane region" description="Helical" evidence="2">
    <location>
        <begin position="77"/>
        <end position="98"/>
    </location>
</feature>
<feature type="transmembrane region" description="Helical" evidence="2">
    <location>
        <begin position="113"/>
        <end position="133"/>
    </location>
</feature>
<feature type="transmembrane region" description="Helical" evidence="2">
    <location>
        <begin position="178"/>
        <end position="198"/>
    </location>
</feature>
<feature type="transmembrane region" description="Helical" evidence="2">
    <location>
        <begin position="226"/>
        <end position="246"/>
    </location>
</feature>
<feature type="transmembrane region" description="Helical" evidence="2">
    <location>
        <begin position="288"/>
        <end position="308"/>
    </location>
</feature>
<feature type="transmembrane region" description="Helical" evidence="2">
    <location>
        <begin position="320"/>
        <end position="340"/>
    </location>
</feature>
<feature type="transmembrane region" description="Helical" evidence="2">
    <location>
        <begin position="347"/>
        <end position="367"/>
    </location>
</feature>
<feature type="binding site" description="axial binding residue" evidence="2">
    <location>
        <position position="83"/>
    </location>
    <ligand>
        <name>heme b</name>
        <dbReference type="ChEBI" id="CHEBI:60344"/>
        <label>b562</label>
    </ligand>
    <ligandPart>
        <name>Fe</name>
        <dbReference type="ChEBI" id="CHEBI:18248"/>
    </ligandPart>
</feature>
<feature type="binding site" description="axial binding residue" evidence="2">
    <location>
        <position position="97"/>
    </location>
    <ligand>
        <name>heme b</name>
        <dbReference type="ChEBI" id="CHEBI:60344"/>
        <label>b566</label>
    </ligand>
    <ligandPart>
        <name>Fe</name>
        <dbReference type="ChEBI" id="CHEBI:18248"/>
    </ligandPart>
</feature>
<feature type="binding site" description="axial binding residue" evidence="2">
    <location>
        <position position="182"/>
    </location>
    <ligand>
        <name>heme b</name>
        <dbReference type="ChEBI" id="CHEBI:60344"/>
        <label>b562</label>
    </ligand>
    <ligandPart>
        <name>Fe</name>
        <dbReference type="ChEBI" id="CHEBI:18248"/>
    </ligandPart>
</feature>
<feature type="binding site" description="axial binding residue" evidence="2">
    <location>
        <position position="196"/>
    </location>
    <ligand>
        <name>heme b</name>
        <dbReference type="ChEBI" id="CHEBI:60344"/>
        <label>b566</label>
    </ligand>
    <ligandPart>
        <name>Fe</name>
        <dbReference type="ChEBI" id="CHEBI:18248"/>
    </ligandPart>
</feature>
<feature type="binding site" evidence="2">
    <location>
        <position position="201"/>
    </location>
    <ligand>
        <name>a ubiquinone</name>
        <dbReference type="ChEBI" id="CHEBI:16389"/>
    </ligand>
</feature>
<feature type="sequence variant" description="In strain: Isolate USNM 583155.">
    <original>G</original>
    <variation>E</variation>
    <location>
        <position position="340"/>
    </location>
</feature>
<comment type="function">
    <text evidence="2">Component of the ubiquinol-cytochrome c reductase complex (complex III or cytochrome b-c1 complex) that is part of the mitochondrial respiratory chain. The b-c1 complex mediates electron transfer from ubiquinol to cytochrome c. Contributes to the generation of a proton gradient across the mitochondrial membrane that is then used for ATP synthesis.</text>
</comment>
<comment type="cofactor">
    <cofactor evidence="2">
        <name>heme b</name>
        <dbReference type="ChEBI" id="CHEBI:60344"/>
    </cofactor>
    <text evidence="2">Binds 2 heme b groups non-covalently.</text>
</comment>
<comment type="subunit">
    <text evidence="2">The cytochrome bc1 complex contains 11 subunits: 3 respiratory subunits (MT-CYB, CYC1 and UQCRFS1), 2 core proteins (UQCRC1 and UQCRC2) and 6 low-molecular weight proteins (UQCRH/QCR6, UQCRB/QCR7, UQCRQ/QCR8, UQCR10/QCR9, UQCR11/QCR10 and a cleavage product of UQCRFS1). This cytochrome bc1 complex then forms a dimer.</text>
</comment>
<comment type="subcellular location">
    <subcellularLocation>
        <location evidence="2">Mitochondrion inner membrane</location>
        <topology evidence="2">Multi-pass membrane protein</topology>
    </subcellularLocation>
</comment>
<comment type="miscellaneous">
    <text evidence="1">Heme 1 (or BL or b562) is low-potential and absorbs at about 562 nm, and heme 2 (or BH or b566) is high-potential and absorbs at about 566 nm.</text>
</comment>
<comment type="similarity">
    <text evidence="3 4">Belongs to the cytochrome b family.</text>
</comment>
<comment type="caution">
    <text evidence="2">The full-length protein contains only eight transmembrane helices, not nine as predicted by bioinformatics tools.</text>
</comment>
<protein>
    <recommendedName>
        <fullName>Cytochrome b</fullName>
    </recommendedName>
    <alternativeName>
        <fullName>Complex III subunit 3</fullName>
    </alternativeName>
    <alternativeName>
        <fullName>Complex III subunit III</fullName>
    </alternativeName>
    <alternativeName>
        <fullName>Cytochrome b-c1 complex subunit 3</fullName>
    </alternativeName>
    <alternativeName>
        <fullName>Ubiquinol-cytochrome-c reductase complex cytochrome b subunit</fullName>
    </alternativeName>
</protein>
<gene>
    <name type="primary">MT-CYB</name>
    <name type="synonym">COB</name>
    <name type="synonym">CYTB</name>
    <name type="synonym">MTCYB</name>
</gene>
<evidence type="ECO:0000250" key="1"/>
<evidence type="ECO:0000250" key="2">
    <source>
        <dbReference type="UniProtKB" id="P00157"/>
    </source>
</evidence>
<evidence type="ECO:0000255" key="3">
    <source>
        <dbReference type="PROSITE-ProRule" id="PRU00967"/>
    </source>
</evidence>
<evidence type="ECO:0000255" key="4">
    <source>
        <dbReference type="PROSITE-ProRule" id="PRU00968"/>
    </source>
</evidence>
<organism>
    <name type="scientific">Marmota broweri</name>
    <name type="common">Alaska marmot</name>
    <dbReference type="NCBI Taxonomy" id="93159"/>
    <lineage>
        <taxon>Eukaryota</taxon>
        <taxon>Metazoa</taxon>
        <taxon>Chordata</taxon>
        <taxon>Craniata</taxon>
        <taxon>Vertebrata</taxon>
        <taxon>Euteleostomi</taxon>
        <taxon>Mammalia</taxon>
        <taxon>Eutheria</taxon>
        <taxon>Euarchontoglires</taxon>
        <taxon>Glires</taxon>
        <taxon>Rodentia</taxon>
        <taxon>Sciuromorpha</taxon>
        <taxon>Sciuridae</taxon>
        <taxon>Xerinae</taxon>
        <taxon>Marmotini</taxon>
        <taxon>Marmota</taxon>
    </lineage>
</organism>
<sequence>MTNTRKIHPLIKIINHSFIDLPAPSNISTWWNFGSLLGLCLAIQIFTGLFLAMHYTSDTMTAFSSVAHICRDVNYGWLIRYMHANGASMFFICLFLHVGRGMYYGSYTYSETWNIGVILLFAVMATAFMGYVLPWGQMSFWGATVITNLLSATPYIGTTLVEWIWGGFSVDKATLTRFFAFHFVLPFIIAALVMVHLLFLHETGSNNPSGLISDSDKIPFHPYFTIKDILGAVLLILILMILVLFSPDLLGDPDNYTPANPLNTPFHIKPEWYFLFAYAILRSIPNKLGGVLALIFSILILMLFPLLHLSKQRSMMFRPLSQCVFWILVADLITLTWIGGQSTEYPYNIIGQLASILYFAIILLILPTISLIENKLLKW</sequence>
<dbReference type="EMBL" id="AF143918">
    <property type="protein sequence ID" value="AAD29725.1"/>
    <property type="molecule type" value="Genomic_DNA"/>
</dbReference>
<dbReference type="EMBL" id="AF143919">
    <property type="protein sequence ID" value="AAD29726.1"/>
    <property type="molecule type" value="Genomic_DNA"/>
</dbReference>
<dbReference type="SMR" id="Q9TH46"/>
<dbReference type="GO" id="GO:0005743">
    <property type="term" value="C:mitochondrial inner membrane"/>
    <property type="evidence" value="ECO:0007669"/>
    <property type="project" value="UniProtKB-SubCell"/>
</dbReference>
<dbReference type="GO" id="GO:0045275">
    <property type="term" value="C:respiratory chain complex III"/>
    <property type="evidence" value="ECO:0007669"/>
    <property type="project" value="InterPro"/>
</dbReference>
<dbReference type="GO" id="GO:0046872">
    <property type="term" value="F:metal ion binding"/>
    <property type="evidence" value="ECO:0007669"/>
    <property type="project" value="UniProtKB-KW"/>
</dbReference>
<dbReference type="GO" id="GO:0008121">
    <property type="term" value="F:ubiquinol-cytochrome-c reductase activity"/>
    <property type="evidence" value="ECO:0007669"/>
    <property type="project" value="InterPro"/>
</dbReference>
<dbReference type="GO" id="GO:0006122">
    <property type="term" value="P:mitochondrial electron transport, ubiquinol to cytochrome c"/>
    <property type="evidence" value="ECO:0007669"/>
    <property type="project" value="TreeGrafter"/>
</dbReference>
<dbReference type="CDD" id="cd00290">
    <property type="entry name" value="cytochrome_b_C"/>
    <property type="match status" value="1"/>
</dbReference>
<dbReference type="CDD" id="cd00284">
    <property type="entry name" value="Cytochrome_b_N"/>
    <property type="match status" value="1"/>
</dbReference>
<dbReference type="FunFam" id="1.20.810.10:FF:000002">
    <property type="entry name" value="Cytochrome b"/>
    <property type="match status" value="1"/>
</dbReference>
<dbReference type="Gene3D" id="1.20.810.10">
    <property type="entry name" value="Cytochrome Bc1 Complex, Chain C"/>
    <property type="match status" value="1"/>
</dbReference>
<dbReference type="InterPro" id="IPR005798">
    <property type="entry name" value="Cyt_b/b6_C"/>
</dbReference>
<dbReference type="InterPro" id="IPR036150">
    <property type="entry name" value="Cyt_b/b6_C_sf"/>
</dbReference>
<dbReference type="InterPro" id="IPR005797">
    <property type="entry name" value="Cyt_b/b6_N"/>
</dbReference>
<dbReference type="InterPro" id="IPR027387">
    <property type="entry name" value="Cytb/b6-like_sf"/>
</dbReference>
<dbReference type="InterPro" id="IPR030689">
    <property type="entry name" value="Cytochrome_b"/>
</dbReference>
<dbReference type="InterPro" id="IPR048260">
    <property type="entry name" value="Cytochrome_b_C_euk/bac"/>
</dbReference>
<dbReference type="InterPro" id="IPR048259">
    <property type="entry name" value="Cytochrome_b_N_euk/bac"/>
</dbReference>
<dbReference type="InterPro" id="IPR016174">
    <property type="entry name" value="Di-haem_cyt_TM"/>
</dbReference>
<dbReference type="PANTHER" id="PTHR19271">
    <property type="entry name" value="CYTOCHROME B"/>
    <property type="match status" value="1"/>
</dbReference>
<dbReference type="PANTHER" id="PTHR19271:SF16">
    <property type="entry name" value="CYTOCHROME B"/>
    <property type="match status" value="1"/>
</dbReference>
<dbReference type="Pfam" id="PF00032">
    <property type="entry name" value="Cytochrom_B_C"/>
    <property type="match status" value="1"/>
</dbReference>
<dbReference type="Pfam" id="PF00033">
    <property type="entry name" value="Cytochrome_B"/>
    <property type="match status" value="1"/>
</dbReference>
<dbReference type="PIRSF" id="PIRSF038885">
    <property type="entry name" value="COB"/>
    <property type="match status" value="1"/>
</dbReference>
<dbReference type="SUPFAM" id="SSF81648">
    <property type="entry name" value="a domain/subunit of cytochrome bc1 complex (Ubiquinol-cytochrome c reductase)"/>
    <property type="match status" value="1"/>
</dbReference>
<dbReference type="SUPFAM" id="SSF81342">
    <property type="entry name" value="Transmembrane di-heme cytochromes"/>
    <property type="match status" value="1"/>
</dbReference>
<dbReference type="PROSITE" id="PS51003">
    <property type="entry name" value="CYTB_CTER"/>
    <property type="match status" value="1"/>
</dbReference>
<dbReference type="PROSITE" id="PS51002">
    <property type="entry name" value="CYTB_NTER"/>
    <property type="match status" value="1"/>
</dbReference>
<accession>Q9TH46</accession>
<accession>Q9XMB8</accession>
<proteinExistence type="inferred from homology"/>
<reference key="1">
    <citation type="journal article" date="1999" name="Syst. Biol.">
        <title>Molecular phylogeny of the marmots (Rodentia: Sciuridae): tests of evolutionary and biogeographic hypotheses.</title>
        <authorList>
            <person name="Steppan S.J."/>
            <person name="Akhverdyan M.R."/>
            <person name="Lyapunova E.A."/>
            <person name="Fraser D.G."/>
            <person name="Vorontsov N.N."/>
            <person name="Hoffmann R.S."/>
            <person name="Braun M.J."/>
        </authorList>
    </citation>
    <scope>NUCLEOTIDE SEQUENCE [GENOMIC DNA]</scope>
    <source>
        <strain>Isolate USNM 583154</strain>
        <strain>Isolate USNM 583155</strain>
    </source>
</reference>